<gene>
    <name evidence="1" type="primary">washc3</name>
    <name type="synonym">ccdc53</name>
</gene>
<sequence length="210" mass="22562">MDEDGLPIVGSGIDLTKVPAIQQRRVVAYLNQFIVHTVRFLNRFSTVCEEKLASISLRIQQIETTLSILEAKLSSIPGLEDVRVEGVGQLPATEVNGPVTVVVPSQPETPIAVAVPLPPPEASPNIPDPRAAEAAGDGRMTVAKDPRYARYLKMVQVGVPVMAIKNKMVQEGLDPNLLDTPDAPVPDAVKKNTLDQDDDSDDGSESSFSD</sequence>
<feature type="chain" id="PRO_0000390956" description="WASH complex subunit 3">
    <location>
        <begin position="1"/>
        <end position="210"/>
    </location>
</feature>
<feature type="region of interest" description="Disordered" evidence="3">
    <location>
        <begin position="173"/>
        <end position="210"/>
    </location>
</feature>
<feature type="coiled-coil region" evidence="2">
    <location>
        <begin position="49"/>
        <end position="73"/>
    </location>
</feature>
<feature type="compositionally biased region" description="Acidic residues" evidence="3">
    <location>
        <begin position="195"/>
        <end position="204"/>
    </location>
</feature>
<dbReference type="EMBL" id="BT045600">
    <property type="protein sequence ID" value="ACI33862.1"/>
    <property type="molecule type" value="mRNA"/>
</dbReference>
<dbReference type="RefSeq" id="NP_001133766.1">
    <property type="nucleotide sequence ID" value="NM_001140294.1"/>
</dbReference>
<dbReference type="SMR" id="B5X3I1"/>
<dbReference type="STRING" id="8030.ENSSSAP00000039921"/>
<dbReference type="PaxDb" id="8030-ENSSSAP00000039921"/>
<dbReference type="Ensembl" id="ENSSSAT00070038728">
    <property type="protein sequence ID" value="ENSSSAP00070036971"/>
    <property type="gene ID" value="ENSSSAG00070024300"/>
</dbReference>
<dbReference type="GeneID" id="100195265"/>
<dbReference type="KEGG" id="sasa:100195265"/>
<dbReference type="CTD" id="51019"/>
<dbReference type="OrthoDB" id="535256at7898"/>
<dbReference type="Proteomes" id="UP000087266">
    <property type="component" value="Chromosome ssa07"/>
</dbReference>
<dbReference type="Bgee" id="ENSSSAG00000044345">
    <property type="expression patterns" value="Expressed in ovary and 25 other cell types or tissues"/>
</dbReference>
<dbReference type="GO" id="GO:0071203">
    <property type="term" value="C:WASH complex"/>
    <property type="evidence" value="ECO:0000250"/>
    <property type="project" value="UniProtKB"/>
</dbReference>
<dbReference type="GO" id="GO:0030041">
    <property type="term" value="P:actin filament polymerization"/>
    <property type="evidence" value="ECO:0007669"/>
    <property type="project" value="TreeGrafter"/>
</dbReference>
<dbReference type="GO" id="GO:0006887">
    <property type="term" value="P:exocytosis"/>
    <property type="evidence" value="ECO:0007669"/>
    <property type="project" value="TreeGrafter"/>
</dbReference>
<dbReference type="FunFam" id="1.20.5.110:FF:000025">
    <property type="entry name" value="Putative WASH complex subunit CCDC53"/>
    <property type="match status" value="1"/>
</dbReference>
<dbReference type="Gene3D" id="1.20.5.110">
    <property type="match status" value="1"/>
</dbReference>
<dbReference type="InterPro" id="IPR019309">
    <property type="entry name" value="WASHC3"/>
</dbReference>
<dbReference type="PANTHER" id="PTHR13015">
    <property type="entry name" value="PROTEIN AD-016-RELATED"/>
    <property type="match status" value="1"/>
</dbReference>
<dbReference type="PANTHER" id="PTHR13015:SF0">
    <property type="entry name" value="WASH COMPLEX SUBUNIT 3"/>
    <property type="match status" value="1"/>
</dbReference>
<dbReference type="Pfam" id="PF10152">
    <property type="entry name" value="CCDC53"/>
    <property type="match status" value="1"/>
</dbReference>
<keyword id="KW-0175">Coiled coil</keyword>
<keyword id="KW-1185">Reference proteome</keyword>
<name>WASC3_SALSA</name>
<comment type="subunit">
    <text evidence="1">Component of the WASH complex.</text>
</comment>
<comment type="similarity">
    <text evidence="4">Belongs to the CCDC53 family.</text>
</comment>
<evidence type="ECO:0000250" key="1">
    <source>
        <dbReference type="UniProtKB" id="Q9Y3C0"/>
    </source>
</evidence>
<evidence type="ECO:0000255" key="2"/>
<evidence type="ECO:0000256" key="3">
    <source>
        <dbReference type="SAM" id="MobiDB-lite"/>
    </source>
</evidence>
<evidence type="ECO:0000305" key="4"/>
<protein>
    <recommendedName>
        <fullName evidence="1">WASH complex subunit 3</fullName>
    </recommendedName>
    <alternativeName>
        <fullName>Coiled-coil domain-containing protein 53</fullName>
    </alternativeName>
</protein>
<proteinExistence type="evidence at transcript level"/>
<accession>B5X3I1</accession>
<reference key="1">
    <citation type="journal article" date="2010" name="BMC Genomics">
        <title>Salmo salar and Esox lucius full-length cDNA sequences reveal changes in evolutionary pressures on a post-tetraploidization genome.</title>
        <authorList>
            <person name="Leong J.S."/>
            <person name="Jantzen S.G."/>
            <person name="von Schalburg K.R."/>
            <person name="Cooper G.A."/>
            <person name="Messmer A.M."/>
            <person name="Liao N.Y."/>
            <person name="Munro S."/>
            <person name="Moore R."/>
            <person name="Holt R.A."/>
            <person name="Jones S.J."/>
            <person name="Davidson W.S."/>
            <person name="Koop B.F."/>
        </authorList>
    </citation>
    <scope>NUCLEOTIDE SEQUENCE [LARGE SCALE MRNA]</scope>
    <source>
        <tissue>Brain</tissue>
    </source>
</reference>
<organism>
    <name type="scientific">Salmo salar</name>
    <name type="common">Atlantic salmon</name>
    <dbReference type="NCBI Taxonomy" id="8030"/>
    <lineage>
        <taxon>Eukaryota</taxon>
        <taxon>Metazoa</taxon>
        <taxon>Chordata</taxon>
        <taxon>Craniata</taxon>
        <taxon>Vertebrata</taxon>
        <taxon>Euteleostomi</taxon>
        <taxon>Actinopterygii</taxon>
        <taxon>Neopterygii</taxon>
        <taxon>Teleostei</taxon>
        <taxon>Protacanthopterygii</taxon>
        <taxon>Salmoniformes</taxon>
        <taxon>Salmonidae</taxon>
        <taxon>Salmoninae</taxon>
        <taxon>Salmo</taxon>
    </lineage>
</organism>